<comment type="function">
    <text evidence="1">Binds 23S rRNA and is also seen to make contacts with the A and possibly P site tRNAs.</text>
</comment>
<comment type="subunit">
    <text evidence="1">Part of the 50S ribosomal subunit.</text>
</comment>
<comment type="similarity">
    <text evidence="1">Belongs to the universal ribosomal protein uL16 family.</text>
</comment>
<organism>
    <name type="scientific">Caulobacter vibrioides (strain ATCC 19089 / CIP 103742 / CB 15)</name>
    <name type="common">Caulobacter crescentus</name>
    <dbReference type="NCBI Taxonomy" id="190650"/>
    <lineage>
        <taxon>Bacteria</taxon>
        <taxon>Pseudomonadati</taxon>
        <taxon>Pseudomonadota</taxon>
        <taxon>Alphaproteobacteria</taxon>
        <taxon>Caulobacterales</taxon>
        <taxon>Caulobacteraceae</taxon>
        <taxon>Caulobacter</taxon>
    </lineage>
</organism>
<dbReference type="EMBL" id="AE005673">
    <property type="protein sequence ID" value="AAK23236.1"/>
    <property type="molecule type" value="Genomic_DNA"/>
</dbReference>
<dbReference type="PIR" id="H87404">
    <property type="entry name" value="H87404"/>
</dbReference>
<dbReference type="RefSeq" id="NP_420068.1">
    <property type="nucleotide sequence ID" value="NC_002696.2"/>
</dbReference>
<dbReference type="RefSeq" id="WP_010919134.1">
    <property type="nucleotide sequence ID" value="NC_002696.2"/>
</dbReference>
<dbReference type="SMR" id="Q9A8U6"/>
<dbReference type="STRING" id="190650.CC_1255"/>
<dbReference type="EnsemblBacteria" id="AAK23236">
    <property type="protein sequence ID" value="AAK23236"/>
    <property type="gene ID" value="CC_1255"/>
</dbReference>
<dbReference type="KEGG" id="ccr:CC_1255"/>
<dbReference type="PATRIC" id="fig|190650.5.peg.1280"/>
<dbReference type="eggNOG" id="COG0197">
    <property type="taxonomic scope" value="Bacteria"/>
</dbReference>
<dbReference type="HOGENOM" id="CLU_078858_2_1_5"/>
<dbReference type="BioCyc" id="CAULO:CC1255-MONOMER"/>
<dbReference type="Proteomes" id="UP000001816">
    <property type="component" value="Chromosome"/>
</dbReference>
<dbReference type="GO" id="GO:0022625">
    <property type="term" value="C:cytosolic large ribosomal subunit"/>
    <property type="evidence" value="ECO:0007669"/>
    <property type="project" value="TreeGrafter"/>
</dbReference>
<dbReference type="GO" id="GO:0019843">
    <property type="term" value="F:rRNA binding"/>
    <property type="evidence" value="ECO:0007669"/>
    <property type="project" value="UniProtKB-UniRule"/>
</dbReference>
<dbReference type="GO" id="GO:0003735">
    <property type="term" value="F:structural constituent of ribosome"/>
    <property type="evidence" value="ECO:0007669"/>
    <property type="project" value="InterPro"/>
</dbReference>
<dbReference type="GO" id="GO:0000049">
    <property type="term" value="F:tRNA binding"/>
    <property type="evidence" value="ECO:0007669"/>
    <property type="project" value="UniProtKB-KW"/>
</dbReference>
<dbReference type="GO" id="GO:0006412">
    <property type="term" value="P:translation"/>
    <property type="evidence" value="ECO:0007669"/>
    <property type="project" value="UniProtKB-UniRule"/>
</dbReference>
<dbReference type="CDD" id="cd01433">
    <property type="entry name" value="Ribosomal_L16_L10e"/>
    <property type="match status" value="1"/>
</dbReference>
<dbReference type="FunFam" id="3.90.1170.10:FF:000001">
    <property type="entry name" value="50S ribosomal protein L16"/>
    <property type="match status" value="1"/>
</dbReference>
<dbReference type="Gene3D" id="3.90.1170.10">
    <property type="entry name" value="Ribosomal protein L10e/L16"/>
    <property type="match status" value="1"/>
</dbReference>
<dbReference type="HAMAP" id="MF_01342">
    <property type="entry name" value="Ribosomal_uL16"/>
    <property type="match status" value="1"/>
</dbReference>
<dbReference type="InterPro" id="IPR047873">
    <property type="entry name" value="Ribosomal_uL16"/>
</dbReference>
<dbReference type="InterPro" id="IPR000114">
    <property type="entry name" value="Ribosomal_uL16_bact-type"/>
</dbReference>
<dbReference type="InterPro" id="IPR020798">
    <property type="entry name" value="Ribosomal_uL16_CS"/>
</dbReference>
<dbReference type="InterPro" id="IPR016180">
    <property type="entry name" value="Ribosomal_uL16_dom"/>
</dbReference>
<dbReference type="InterPro" id="IPR036920">
    <property type="entry name" value="Ribosomal_uL16_sf"/>
</dbReference>
<dbReference type="NCBIfam" id="TIGR01164">
    <property type="entry name" value="rplP_bact"/>
    <property type="match status" value="1"/>
</dbReference>
<dbReference type="PANTHER" id="PTHR12220">
    <property type="entry name" value="50S/60S RIBOSOMAL PROTEIN L16"/>
    <property type="match status" value="1"/>
</dbReference>
<dbReference type="PANTHER" id="PTHR12220:SF13">
    <property type="entry name" value="LARGE RIBOSOMAL SUBUNIT PROTEIN UL16M"/>
    <property type="match status" value="1"/>
</dbReference>
<dbReference type="Pfam" id="PF00252">
    <property type="entry name" value="Ribosomal_L16"/>
    <property type="match status" value="1"/>
</dbReference>
<dbReference type="PRINTS" id="PR00060">
    <property type="entry name" value="RIBOSOMALL16"/>
</dbReference>
<dbReference type="SUPFAM" id="SSF54686">
    <property type="entry name" value="Ribosomal protein L16p/L10e"/>
    <property type="match status" value="1"/>
</dbReference>
<dbReference type="PROSITE" id="PS00586">
    <property type="entry name" value="RIBOSOMAL_L16_1"/>
    <property type="match status" value="1"/>
</dbReference>
<dbReference type="PROSITE" id="PS00701">
    <property type="entry name" value="RIBOSOMAL_L16_2"/>
    <property type="match status" value="1"/>
</dbReference>
<keyword id="KW-1185">Reference proteome</keyword>
<keyword id="KW-0687">Ribonucleoprotein</keyword>
<keyword id="KW-0689">Ribosomal protein</keyword>
<keyword id="KW-0694">RNA-binding</keyword>
<keyword id="KW-0699">rRNA-binding</keyword>
<keyword id="KW-0820">tRNA-binding</keyword>
<sequence>MLSPKKTKFRKQFKGRIHGTSKGGTLLNFGSYGLKAVEPERITARQIEAARRAITRQMKRQGRVWIRIFPDVPVTGKPAEVRMGKGKGAVDYWAARVAPGRIMFEIDGVPDDIAREALRLGAAKLPIRTRVVTRIDAGVAQEA</sequence>
<evidence type="ECO:0000255" key="1">
    <source>
        <dbReference type="HAMAP-Rule" id="MF_01342"/>
    </source>
</evidence>
<evidence type="ECO:0000305" key="2"/>
<accession>Q9A8U6</accession>
<name>RL16_CAUVC</name>
<feature type="chain" id="PRO_0000062073" description="Large ribosomal subunit protein uL16">
    <location>
        <begin position="1"/>
        <end position="143"/>
    </location>
</feature>
<proteinExistence type="inferred from homology"/>
<reference key="1">
    <citation type="journal article" date="2001" name="Proc. Natl. Acad. Sci. U.S.A.">
        <title>Complete genome sequence of Caulobacter crescentus.</title>
        <authorList>
            <person name="Nierman W.C."/>
            <person name="Feldblyum T.V."/>
            <person name="Laub M.T."/>
            <person name="Paulsen I.T."/>
            <person name="Nelson K.E."/>
            <person name="Eisen J.A."/>
            <person name="Heidelberg J.F."/>
            <person name="Alley M.R.K."/>
            <person name="Ohta N."/>
            <person name="Maddock J.R."/>
            <person name="Potocka I."/>
            <person name="Nelson W.C."/>
            <person name="Newton A."/>
            <person name="Stephens C."/>
            <person name="Phadke N.D."/>
            <person name="Ely B."/>
            <person name="DeBoy R.T."/>
            <person name="Dodson R.J."/>
            <person name="Durkin A.S."/>
            <person name="Gwinn M.L."/>
            <person name="Haft D.H."/>
            <person name="Kolonay J.F."/>
            <person name="Smit J."/>
            <person name="Craven M.B."/>
            <person name="Khouri H.M."/>
            <person name="Shetty J."/>
            <person name="Berry K.J."/>
            <person name="Utterback T.R."/>
            <person name="Tran K."/>
            <person name="Wolf A.M."/>
            <person name="Vamathevan J.J."/>
            <person name="Ermolaeva M.D."/>
            <person name="White O."/>
            <person name="Salzberg S.L."/>
            <person name="Venter J.C."/>
            <person name="Shapiro L."/>
            <person name="Fraser C.M."/>
        </authorList>
    </citation>
    <scope>NUCLEOTIDE SEQUENCE [LARGE SCALE GENOMIC DNA]</scope>
    <source>
        <strain>ATCC 19089 / CIP 103742 / CB 15</strain>
    </source>
</reference>
<gene>
    <name evidence="1" type="primary">rplP</name>
    <name type="ordered locus">CC_1255</name>
</gene>
<protein>
    <recommendedName>
        <fullName evidence="1">Large ribosomal subunit protein uL16</fullName>
    </recommendedName>
    <alternativeName>
        <fullName evidence="2">50S ribosomal protein L16</fullName>
    </alternativeName>
</protein>